<gene>
    <name evidence="1" type="primary">rpsT</name>
    <name type="ordered locus">MW1537</name>
</gene>
<keyword id="KW-0002">3D-structure</keyword>
<keyword id="KW-0687">Ribonucleoprotein</keyword>
<keyword id="KW-0689">Ribosomal protein</keyword>
<keyword id="KW-0694">RNA-binding</keyword>
<keyword id="KW-0699">rRNA-binding</keyword>
<protein>
    <recommendedName>
        <fullName evidence="1">Small ribosomal subunit protein bS20</fullName>
    </recommendedName>
    <alternativeName>
        <fullName evidence="2">30S ribosomal protein S20</fullName>
    </alternativeName>
</protein>
<organism>
    <name type="scientific">Staphylococcus aureus (strain MW2)</name>
    <dbReference type="NCBI Taxonomy" id="196620"/>
    <lineage>
        <taxon>Bacteria</taxon>
        <taxon>Bacillati</taxon>
        <taxon>Bacillota</taxon>
        <taxon>Bacilli</taxon>
        <taxon>Bacillales</taxon>
        <taxon>Staphylococcaceae</taxon>
        <taxon>Staphylococcus</taxon>
    </lineage>
</organism>
<proteinExistence type="evidence at protein level"/>
<dbReference type="EMBL" id="BA000033">
    <property type="protein sequence ID" value="BAB95402.1"/>
    <property type="molecule type" value="Genomic_DNA"/>
</dbReference>
<dbReference type="RefSeq" id="WP_001274017.1">
    <property type="nucleotide sequence ID" value="NC_003923.1"/>
</dbReference>
<dbReference type="PDB" id="8Y38">
    <property type="method" value="EM"/>
    <property type="resolution" value="2.58 A"/>
    <property type="chains" value="t=1-83"/>
</dbReference>
<dbReference type="PDB" id="8Y39">
    <property type="method" value="EM"/>
    <property type="resolution" value="3.60 A"/>
    <property type="chains" value="t=1-83"/>
</dbReference>
<dbReference type="PDBsum" id="8Y38"/>
<dbReference type="PDBsum" id="8Y39"/>
<dbReference type="EMDB" id="EMD-38875"/>
<dbReference type="EMDB" id="EMD-38876"/>
<dbReference type="SMR" id="Q7A0R9"/>
<dbReference type="GeneID" id="66839775"/>
<dbReference type="KEGG" id="sam:MW1537"/>
<dbReference type="HOGENOM" id="CLU_160655_1_1_9"/>
<dbReference type="GO" id="GO:0005829">
    <property type="term" value="C:cytosol"/>
    <property type="evidence" value="ECO:0007669"/>
    <property type="project" value="TreeGrafter"/>
</dbReference>
<dbReference type="GO" id="GO:0015935">
    <property type="term" value="C:small ribosomal subunit"/>
    <property type="evidence" value="ECO:0007669"/>
    <property type="project" value="TreeGrafter"/>
</dbReference>
<dbReference type="GO" id="GO:0070181">
    <property type="term" value="F:small ribosomal subunit rRNA binding"/>
    <property type="evidence" value="ECO:0007669"/>
    <property type="project" value="TreeGrafter"/>
</dbReference>
<dbReference type="GO" id="GO:0003735">
    <property type="term" value="F:structural constituent of ribosome"/>
    <property type="evidence" value="ECO:0007669"/>
    <property type="project" value="InterPro"/>
</dbReference>
<dbReference type="GO" id="GO:0006412">
    <property type="term" value="P:translation"/>
    <property type="evidence" value="ECO:0007669"/>
    <property type="project" value="UniProtKB-UniRule"/>
</dbReference>
<dbReference type="Gene3D" id="1.20.58.110">
    <property type="entry name" value="Ribosomal protein S20"/>
    <property type="match status" value="1"/>
</dbReference>
<dbReference type="HAMAP" id="MF_00500">
    <property type="entry name" value="Ribosomal_bS20"/>
    <property type="match status" value="1"/>
</dbReference>
<dbReference type="InterPro" id="IPR002583">
    <property type="entry name" value="Ribosomal_bS20"/>
</dbReference>
<dbReference type="InterPro" id="IPR036510">
    <property type="entry name" value="Ribosomal_bS20_sf"/>
</dbReference>
<dbReference type="NCBIfam" id="TIGR00029">
    <property type="entry name" value="S20"/>
    <property type="match status" value="1"/>
</dbReference>
<dbReference type="PANTHER" id="PTHR33398">
    <property type="entry name" value="30S RIBOSOMAL PROTEIN S20"/>
    <property type="match status" value="1"/>
</dbReference>
<dbReference type="PANTHER" id="PTHR33398:SF1">
    <property type="entry name" value="SMALL RIBOSOMAL SUBUNIT PROTEIN BS20C"/>
    <property type="match status" value="1"/>
</dbReference>
<dbReference type="Pfam" id="PF01649">
    <property type="entry name" value="Ribosomal_S20p"/>
    <property type="match status" value="1"/>
</dbReference>
<dbReference type="SUPFAM" id="SSF46992">
    <property type="entry name" value="Ribosomal protein S20"/>
    <property type="match status" value="1"/>
</dbReference>
<sequence>MANIKSAIKRVKTTEKAEARNISQKSAMRTAVKNAKTAVSNNADNKNELVSLAVKLVDKAAQSNLIHSNKADRIKSQLMTANK</sequence>
<name>RS20_STAAW</name>
<comment type="function">
    <text evidence="1">Binds directly to 16S ribosomal RNA.</text>
</comment>
<comment type="similarity">
    <text evidence="1">Belongs to the bacterial ribosomal protein bS20 family.</text>
</comment>
<reference key="1">
    <citation type="journal article" date="2002" name="Lancet">
        <title>Genome and virulence determinants of high virulence community-acquired MRSA.</title>
        <authorList>
            <person name="Baba T."/>
            <person name="Takeuchi F."/>
            <person name="Kuroda M."/>
            <person name="Yuzawa H."/>
            <person name="Aoki K."/>
            <person name="Oguchi A."/>
            <person name="Nagai Y."/>
            <person name="Iwama N."/>
            <person name="Asano K."/>
            <person name="Naimi T."/>
            <person name="Kuroda H."/>
            <person name="Cui L."/>
            <person name="Yamamoto K."/>
            <person name="Hiramatsu K."/>
        </authorList>
    </citation>
    <scope>NUCLEOTIDE SEQUENCE [LARGE SCALE GENOMIC DNA]</scope>
    <source>
        <strain>MW2</strain>
    </source>
</reference>
<evidence type="ECO:0000255" key="1">
    <source>
        <dbReference type="HAMAP-Rule" id="MF_00500"/>
    </source>
</evidence>
<evidence type="ECO:0000305" key="2"/>
<feature type="chain" id="PRO_0000224950" description="Small ribosomal subunit protein bS20">
    <location>
        <begin position="1"/>
        <end position="83"/>
    </location>
</feature>
<accession>Q7A0R9</accession>